<name>CIAO1_ANOGA</name>
<accession>Q7PS24</accession>
<evidence type="ECO:0000255" key="1">
    <source>
        <dbReference type="HAMAP-Rule" id="MF_03037"/>
    </source>
</evidence>
<gene>
    <name evidence="1" type="primary">Ciao1</name>
    <name type="ORF">AGAP000444</name>
</gene>
<protein>
    <recommendedName>
        <fullName evidence="1">Probable cytosolic iron-sulfur protein assembly protein Ciao1</fullName>
    </recommendedName>
</protein>
<feature type="chain" id="PRO_0000382481" description="Probable cytosolic iron-sulfur protein assembly protein Ciao1">
    <location>
        <begin position="1"/>
        <end position="341"/>
    </location>
</feature>
<feature type="repeat" description="WD 1">
    <location>
        <begin position="12"/>
        <end position="51"/>
    </location>
</feature>
<feature type="repeat" description="WD 2">
    <location>
        <begin position="58"/>
        <end position="97"/>
    </location>
</feature>
<feature type="repeat" description="WD 3">
    <location>
        <begin position="102"/>
        <end position="141"/>
    </location>
</feature>
<feature type="repeat" description="WD 4">
    <location>
        <begin position="151"/>
        <end position="190"/>
    </location>
</feature>
<feature type="repeat" description="WD 5">
    <location>
        <begin position="197"/>
        <end position="236"/>
    </location>
</feature>
<feature type="repeat" description="WD 6">
    <location>
        <begin position="255"/>
        <end position="294"/>
    </location>
</feature>
<feature type="repeat" description="WD 7">
    <location>
        <begin position="305"/>
        <end position="341"/>
    </location>
</feature>
<proteinExistence type="inferred from homology"/>
<dbReference type="EMBL" id="AAAB01008846">
    <property type="protein sequence ID" value="EAA06279.4"/>
    <property type="molecule type" value="Genomic_DNA"/>
</dbReference>
<dbReference type="RefSeq" id="XP_310648.3">
    <property type="nucleotide sequence ID" value="XM_310648.5"/>
</dbReference>
<dbReference type="SMR" id="Q7PS24"/>
<dbReference type="FunCoup" id="Q7PS24">
    <property type="interactions" value="756"/>
</dbReference>
<dbReference type="STRING" id="7165.Q7PS24"/>
<dbReference type="PaxDb" id="7165-AGAP000444-PA"/>
<dbReference type="EnsemblMetazoa" id="AGAP000444-RA">
    <property type="protein sequence ID" value="AGAP000444-PA"/>
    <property type="gene ID" value="AGAP000444"/>
</dbReference>
<dbReference type="GeneID" id="1271794"/>
<dbReference type="KEGG" id="aga:1271794"/>
<dbReference type="CTD" id="9391"/>
<dbReference type="VEuPathDB" id="VectorBase:AGAMI1_002890"/>
<dbReference type="VEuPathDB" id="VectorBase:AGAP000444"/>
<dbReference type="eggNOG" id="KOG0645">
    <property type="taxonomic scope" value="Eukaryota"/>
</dbReference>
<dbReference type="HOGENOM" id="CLU_000288_57_8_1"/>
<dbReference type="InParanoid" id="Q7PS24"/>
<dbReference type="OMA" id="IREIRWS"/>
<dbReference type="PhylomeDB" id="Q7PS24"/>
<dbReference type="Proteomes" id="UP000007062">
    <property type="component" value="Chromosome X"/>
</dbReference>
<dbReference type="GO" id="GO:0097361">
    <property type="term" value="C:cytosolic [4Fe-4S] assembly targeting complex"/>
    <property type="evidence" value="ECO:0000318"/>
    <property type="project" value="GO_Central"/>
</dbReference>
<dbReference type="GO" id="GO:0016226">
    <property type="term" value="P:iron-sulfur cluster assembly"/>
    <property type="evidence" value="ECO:0000318"/>
    <property type="project" value="GO_Central"/>
</dbReference>
<dbReference type="GO" id="GO:0051604">
    <property type="term" value="P:protein maturation"/>
    <property type="evidence" value="ECO:0000250"/>
    <property type="project" value="UniProtKB"/>
</dbReference>
<dbReference type="CDD" id="cd00200">
    <property type="entry name" value="WD40"/>
    <property type="match status" value="1"/>
</dbReference>
<dbReference type="FunFam" id="2.130.10.10:FF:000136">
    <property type="entry name" value="Probable cytosolic iron-sulfur protein assembly protein CIAO1"/>
    <property type="match status" value="1"/>
</dbReference>
<dbReference type="Gene3D" id="2.130.10.10">
    <property type="entry name" value="YVTN repeat-like/Quinoprotein amine dehydrogenase"/>
    <property type="match status" value="2"/>
</dbReference>
<dbReference type="HAMAP" id="MF_03037">
    <property type="entry name" value="ciao1"/>
    <property type="match status" value="1"/>
</dbReference>
<dbReference type="InterPro" id="IPR028608">
    <property type="entry name" value="CIAO1/Cia1"/>
</dbReference>
<dbReference type="InterPro" id="IPR020472">
    <property type="entry name" value="G-protein_beta_WD-40_rep"/>
</dbReference>
<dbReference type="InterPro" id="IPR015943">
    <property type="entry name" value="WD40/YVTN_repeat-like_dom_sf"/>
</dbReference>
<dbReference type="InterPro" id="IPR019775">
    <property type="entry name" value="WD40_repeat_CS"/>
</dbReference>
<dbReference type="InterPro" id="IPR036322">
    <property type="entry name" value="WD40_repeat_dom_sf"/>
</dbReference>
<dbReference type="InterPro" id="IPR001680">
    <property type="entry name" value="WD40_rpt"/>
</dbReference>
<dbReference type="PANTHER" id="PTHR19920:SF0">
    <property type="entry name" value="CYTOSOLIC IRON-SULFUR PROTEIN ASSEMBLY PROTEIN CIAO1-RELATED"/>
    <property type="match status" value="1"/>
</dbReference>
<dbReference type="PANTHER" id="PTHR19920">
    <property type="entry name" value="WD40 PROTEIN CIAO1"/>
    <property type="match status" value="1"/>
</dbReference>
<dbReference type="Pfam" id="PF00400">
    <property type="entry name" value="WD40"/>
    <property type="match status" value="7"/>
</dbReference>
<dbReference type="PRINTS" id="PR00320">
    <property type="entry name" value="GPROTEINBRPT"/>
</dbReference>
<dbReference type="SMART" id="SM00320">
    <property type="entry name" value="WD40"/>
    <property type="match status" value="7"/>
</dbReference>
<dbReference type="SUPFAM" id="SSF50978">
    <property type="entry name" value="WD40 repeat-like"/>
    <property type="match status" value="1"/>
</dbReference>
<dbReference type="PROSITE" id="PS00678">
    <property type="entry name" value="WD_REPEATS_1"/>
    <property type="match status" value="1"/>
</dbReference>
<dbReference type="PROSITE" id="PS50082">
    <property type="entry name" value="WD_REPEATS_2"/>
    <property type="match status" value="6"/>
</dbReference>
<dbReference type="PROSITE" id="PS50294">
    <property type="entry name" value="WD_REPEATS_REGION"/>
    <property type="match status" value="1"/>
</dbReference>
<comment type="function">
    <text evidence="1">Essential component of the cytosolic iron-sulfur (Fe/S) protein assembly machinery. Required for the maturation of extramitochondrial Fe/S proteins.</text>
</comment>
<comment type="similarity">
    <text evidence="1">Belongs to the WD repeat CIA1 family.</text>
</comment>
<organism>
    <name type="scientific">Anopheles gambiae</name>
    <name type="common">African malaria mosquito</name>
    <dbReference type="NCBI Taxonomy" id="7165"/>
    <lineage>
        <taxon>Eukaryota</taxon>
        <taxon>Metazoa</taxon>
        <taxon>Ecdysozoa</taxon>
        <taxon>Arthropoda</taxon>
        <taxon>Hexapoda</taxon>
        <taxon>Insecta</taxon>
        <taxon>Pterygota</taxon>
        <taxon>Neoptera</taxon>
        <taxon>Endopterygota</taxon>
        <taxon>Diptera</taxon>
        <taxon>Nematocera</taxon>
        <taxon>Culicoidea</taxon>
        <taxon>Culicidae</taxon>
        <taxon>Anophelinae</taxon>
        <taxon>Anopheles</taxon>
    </lineage>
</organism>
<reference key="1">
    <citation type="journal article" date="2002" name="Science">
        <title>The genome sequence of the malaria mosquito Anopheles gambiae.</title>
        <authorList>
            <person name="Holt R.A."/>
            <person name="Subramanian G.M."/>
            <person name="Halpern A."/>
            <person name="Sutton G.G."/>
            <person name="Charlab R."/>
            <person name="Nusskern D.R."/>
            <person name="Wincker P."/>
            <person name="Clark A.G."/>
            <person name="Ribeiro J.M.C."/>
            <person name="Wides R."/>
            <person name="Salzberg S.L."/>
            <person name="Loftus B.J."/>
            <person name="Yandell M.D."/>
            <person name="Majoros W.H."/>
            <person name="Rusch D.B."/>
            <person name="Lai Z."/>
            <person name="Kraft C.L."/>
            <person name="Abril J.F."/>
            <person name="Anthouard V."/>
            <person name="Arensburger P."/>
            <person name="Atkinson P.W."/>
            <person name="Baden H."/>
            <person name="de Berardinis V."/>
            <person name="Baldwin D."/>
            <person name="Benes V."/>
            <person name="Biedler J."/>
            <person name="Blass C."/>
            <person name="Bolanos R."/>
            <person name="Boscus D."/>
            <person name="Barnstead M."/>
            <person name="Cai S."/>
            <person name="Center A."/>
            <person name="Chaturverdi K."/>
            <person name="Christophides G.K."/>
            <person name="Chrystal M.A.M."/>
            <person name="Clamp M."/>
            <person name="Cravchik A."/>
            <person name="Curwen V."/>
            <person name="Dana A."/>
            <person name="Delcher A."/>
            <person name="Dew I."/>
            <person name="Evans C.A."/>
            <person name="Flanigan M."/>
            <person name="Grundschober-Freimoser A."/>
            <person name="Friedli L."/>
            <person name="Gu Z."/>
            <person name="Guan P."/>
            <person name="Guigo R."/>
            <person name="Hillenmeyer M.E."/>
            <person name="Hladun S.L."/>
            <person name="Hogan J.R."/>
            <person name="Hong Y.S."/>
            <person name="Hoover J."/>
            <person name="Jaillon O."/>
            <person name="Ke Z."/>
            <person name="Kodira C.D."/>
            <person name="Kokoza E."/>
            <person name="Koutsos A."/>
            <person name="Letunic I."/>
            <person name="Levitsky A.A."/>
            <person name="Liang Y."/>
            <person name="Lin J.-J."/>
            <person name="Lobo N.F."/>
            <person name="Lopez J.R."/>
            <person name="Malek J.A."/>
            <person name="McIntosh T.C."/>
            <person name="Meister S."/>
            <person name="Miller J.R."/>
            <person name="Mobarry C."/>
            <person name="Mongin E."/>
            <person name="Murphy S.D."/>
            <person name="O'Brochta D.A."/>
            <person name="Pfannkoch C."/>
            <person name="Qi R."/>
            <person name="Regier M.A."/>
            <person name="Remington K."/>
            <person name="Shao H."/>
            <person name="Sharakhova M.V."/>
            <person name="Sitter C.D."/>
            <person name="Shetty J."/>
            <person name="Smith T.J."/>
            <person name="Strong R."/>
            <person name="Sun J."/>
            <person name="Thomasova D."/>
            <person name="Ton L.Q."/>
            <person name="Topalis P."/>
            <person name="Tu Z.J."/>
            <person name="Unger M.F."/>
            <person name="Walenz B."/>
            <person name="Wang A.H."/>
            <person name="Wang J."/>
            <person name="Wang M."/>
            <person name="Wang X."/>
            <person name="Woodford K.J."/>
            <person name="Wortman J.R."/>
            <person name="Wu M."/>
            <person name="Yao A."/>
            <person name="Zdobnov E.M."/>
            <person name="Zhang H."/>
            <person name="Zhao Q."/>
            <person name="Zhao S."/>
            <person name="Zhu S.C."/>
            <person name="Zhimulev I."/>
            <person name="Coluzzi M."/>
            <person name="della Torre A."/>
            <person name="Roth C.W."/>
            <person name="Louis C."/>
            <person name="Kalush F."/>
            <person name="Mural R.J."/>
            <person name="Myers E.W."/>
            <person name="Adams M.D."/>
            <person name="Smith H.O."/>
            <person name="Broder S."/>
            <person name="Gardner M.J."/>
            <person name="Fraser C.M."/>
            <person name="Birney E."/>
            <person name="Bork P."/>
            <person name="Brey P.T."/>
            <person name="Venter J.C."/>
            <person name="Weissenbach J."/>
            <person name="Kafatos F.C."/>
            <person name="Collins F.H."/>
            <person name="Hoffman S.L."/>
        </authorList>
    </citation>
    <scope>NUCLEOTIDE SEQUENCE [LARGE SCALE GENOMIC DNA]</scope>
    <source>
        <strain>PEST</strain>
    </source>
</reference>
<keyword id="KW-1185">Reference proteome</keyword>
<keyword id="KW-0677">Repeat</keyword>
<keyword id="KW-0853">WD repeat</keyword>
<sequence>MGKLELLQTLTGHAGRVWSAAWHPGGKLFASCGEDKTIRVWNKSDTDRWVAQTVLTDGHTRTIRELAWSCCGHYLASASFDTTVAVWDKKSGEFECNATLEGHDNEVKSVTWSRSGNLLATCSRDKSVWIWEIHHAPDQEDEYECVAVLNGHTQDVKKVCWHPQEDLLASASYDNTIRMYRQDLADSEWEMLEPLESHSSTVWSISFDATGQRLASCSEDTTVKVWQQYGPDNALGIPCPDRGTIWKCVCTLSGYHSRSVYDIDWCKQTGLLATACGDDTVRIFREASDSDRNEPTFELVVTVEAHSQDANKVAWHPTVPGLLLTASDDGEIKLWQYVDAD</sequence>